<keyword id="KW-0687">Ribonucleoprotein</keyword>
<keyword id="KW-0689">Ribosomal protein</keyword>
<keyword id="KW-0694">RNA-binding</keyword>
<keyword id="KW-0699">rRNA-binding</keyword>
<comment type="function">
    <text evidence="1">Binds to the 23S rRNA.</text>
</comment>
<comment type="similarity">
    <text evidence="1">Belongs to the bacterial ribosomal protein bL9 family.</text>
</comment>
<gene>
    <name evidence="1" type="primary">rplI</name>
    <name type="ordered locus">C8J_0620</name>
</gene>
<name>RL9_CAMJ8</name>
<reference key="1">
    <citation type="journal article" date="2007" name="J. Bacteriol.">
        <title>The complete genome sequence of Campylobacter jejuni strain 81116 (NCTC11828).</title>
        <authorList>
            <person name="Pearson B.M."/>
            <person name="Gaskin D.J.H."/>
            <person name="Segers R.P.A.M."/>
            <person name="Wells J.M."/>
            <person name="Nuijten P.J.M."/>
            <person name="van Vliet A.H.M."/>
        </authorList>
    </citation>
    <scope>NUCLEOTIDE SEQUENCE [LARGE SCALE GENOMIC DNA]</scope>
    <source>
        <strain>81116 / NCTC 11828</strain>
    </source>
</reference>
<accession>A8FL82</accession>
<organism>
    <name type="scientific">Campylobacter jejuni subsp. jejuni serotype O:6 (strain 81116 / NCTC 11828)</name>
    <dbReference type="NCBI Taxonomy" id="407148"/>
    <lineage>
        <taxon>Bacteria</taxon>
        <taxon>Pseudomonadati</taxon>
        <taxon>Campylobacterota</taxon>
        <taxon>Epsilonproteobacteria</taxon>
        <taxon>Campylobacterales</taxon>
        <taxon>Campylobacteraceae</taxon>
        <taxon>Campylobacter</taxon>
    </lineage>
</organism>
<dbReference type="EMBL" id="CP000814">
    <property type="protein sequence ID" value="ABV52219.1"/>
    <property type="molecule type" value="Genomic_DNA"/>
</dbReference>
<dbReference type="RefSeq" id="WP_002866518.1">
    <property type="nucleotide sequence ID" value="NC_009839.1"/>
</dbReference>
<dbReference type="SMR" id="A8FL82"/>
<dbReference type="KEGG" id="cju:C8J_0620"/>
<dbReference type="HOGENOM" id="CLU_078938_3_0_7"/>
<dbReference type="GO" id="GO:1990904">
    <property type="term" value="C:ribonucleoprotein complex"/>
    <property type="evidence" value="ECO:0007669"/>
    <property type="project" value="UniProtKB-KW"/>
</dbReference>
<dbReference type="GO" id="GO:0005840">
    <property type="term" value="C:ribosome"/>
    <property type="evidence" value="ECO:0007669"/>
    <property type="project" value="UniProtKB-KW"/>
</dbReference>
<dbReference type="GO" id="GO:0019843">
    <property type="term" value="F:rRNA binding"/>
    <property type="evidence" value="ECO:0007669"/>
    <property type="project" value="UniProtKB-UniRule"/>
</dbReference>
<dbReference type="GO" id="GO:0003735">
    <property type="term" value="F:structural constituent of ribosome"/>
    <property type="evidence" value="ECO:0007669"/>
    <property type="project" value="InterPro"/>
</dbReference>
<dbReference type="GO" id="GO:0006412">
    <property type="term" value="P:translation"/>
    <property type="evidence" value="ECO:0007669"/>
    <property type="project" value="UniProtKB-UniRule"/>
</dbReference>
<dbReference type="FunFam" id="3.40.5.10:FF:000002">
    <property type="entry name" value="50S ribosomal protein L9"/>
    <property type="match status" value="1"/>
</dbReference>
<dbReference type="Gene3D" id="3.10.430.100">
    <property type="entry name" value="Ribosomal protein L9, C-terminal domain"/>
    <property type="match status" value="1"/>
</dbReference>
<dbReference type="Gene3D" id="3.40.5.10">
    <property type="entry name" value="Ribosomal protein L9, N-terminal domain"/>
    <property type="match status" value="1"/>
</dbReference>
<dbReference type="HAMAP" id="MF_00503">
    <property type="entry name" value="Ribosomal_bL9"/>
    <property type="match status" value="1"/>
</dbReference>
<dbReference type="InterPro" id="IPR000244">
    <property type="entry name" value="Ribosomal_bL9"/>
</dbReference>
<dbReference type="InterPro" id="IPR009027">
    <property type="entry name" value="Ribosomal_bL9/RNase_H1_N"/>
</dbReference>
<dbReference type="InterPro" id="IPR020594">
    <property type="entry name" value="Ribosomal_bL9_bac/chp"/>
</dbReference>
<dbReference type="InterPro" id="IPR020069">
    <property type="entry name" value="Ribosomal_bL9_C"/>
</dbReference>
<dbReference type="InterPro" id="IPR036791">
    <property type="entry name" value="Ribosomal_bL9_C_sf"/>
</dbReference>
<dbReference type="InterPro" id="IPR020070">
    <property type="entry name" value="Ribosomal_bL9_N"/>
</dbReference>
<dbReference type="InterPro" id="IPR036935">
    <property type="entry name" value="Ribosomal_bL9_N_sf"/>
</dbReference>
<dbReference type="NCBIfam" id="TIGR00158">
    <property type="entry name" value="L9"/>
    <property type="match status" value="1"/>
</dbReference>
<dbReference type="PANTHER" id="PTHR21368">
    <property type="entry name" value="50S RIBOSOMAL PROTEIN L9"/>
    <property type="match status" value="1"/>
</dbReference>
<dbReference type="Pfam" id="PF03948">
    <property type="entry name" value="Ribosomal_L9_C"/>
    <property type="match status" value="1"/>
</dbReference>
<dbReference type="Pfam" id="PF01281">
    <property type="entry name" value="Ribosomal_L9_N"/>
    <property type="match status" value="1"/>
</dbReference>
<dbReference type="SUPFAM" id="SSF55658">
    <property type="entry name" value="L9 N-domain-like"/>
    <property type="match status" value="1"/>
</dbReference>
<dbReference type="SUPFAM" id="SSF55653">
    <property type="entry name" value="Ribosomal protein L9 C-domain"/>
    <property type="match status" value="1"/>
</dbReference>
<dbReference type="PROSITE" id="PS00651">
    <property type="entry name" value="RIBOSOMAL_L9"/>
    <property type="match status" value="1"/>
</dbReference>
<evidence type="ECO:0000255" key="1">
    <source>
        <dbReference type="HAMAP-Rule" id="MF_00503"/>
    </source>
</evidence>
<evidence type="ECO:0000305" key="2"/>
<sequence length="147" mass="16259">MKVLLIKDVKALGKAGEIKEVKDGYGQNFLIAKGFAKAATNEVLRKYESDKKKEAENLRFEIANLEKLKEELSKITLEISKPVGANGSLFGGVTKDEIAHALKEQSHIEIDKKSLECDTFKSLGLHEVSVKLGHAIHAKFNINIKAE</sequence>
<proteinExistence type="inferred from homology"/>
<feature type="chain" id="PRO_1000072445" description="Large ribosomal subunit protein bL9">
    <location>
        <begin position="1"/>
        <end position="147"/>
    </location>
</feature>
<protein>
    <recommendedName>
        <fullName evidence="1">Large ribosomal subunit protein bL9</fullName>
    </recommendedName>
    <alternativeName>
        <fullName evidence="2">50S ribosomal protein L9</fullName>
    </alternativeName>
</protein>